<protein>
    <recommendedName>
        <fullName>Cytochrome P450 2B4</fullName>
        <ecNumber>1.14.14.1</ecNumber>
    </recommendedName>
    <alternativeName>
        <fullName>CYPIIB4</fullName>
    </alternativeName>
    <alternativeName>
        <fullName>Cytochrome P450 isozyme 2</fullName>
        <shortName>Cytochrome P450 LM2</shortName>
    </alternativeName>
    <alternativeName>
        <fullName>Cytochrome P450 type B0</fullName>
    </alternativeName>
    <alternativeName>
        <fullName>Cytochrome P450 type B1</fullName>
    </alternativeName>
</protein>
<keyword id="KW-0002">3D-structure</keyword>
<keyword id="KW-0903">Direct protein sequencing</keyword>
<keyword id="KW-0256">Endoplasmic reticulum</keyword>
<keyword id="KW-0349">Heme</keyword>
<keyword id="KW-0408">Iron</keyword>
<keyword id="KW-0472">Membrane</keyword>
<keyword id="KW-0479">Metal-binding</keyword>
<keyword id="KW-0492">Microsome</keyword>
<keyword id="KW-0503">Monooxygenase</keyword>
<keyword id="KW-0560">Oxidoreductase</keyword>
<keyword id="KW-0597">Phosphoprotein</keyword>
<keyword id="KW-1185">Reference proteome</keyword>
<sequence length="491" mass="55713">MEFSLLLLLAFLAGLLLLLFRGHPKAHGRLPPGPSPLPVLGNLLQMDRKGLLRSFLRLREKYGDVFTVYLGSRPVVVLCGTDAIREALVDQAEAFSGRGKIAVVDPIFQGYGVIFANGERWRALRRFSLATMRDFGMGKRSVEERIQEEARCLVEELRKSKGALLDNTLLFHSITSNIICSIVFGKRFDYKDPVFLRLLDLFFQSFSLISSFSSQVFELFPGFLKHFPGTHRQIYRNLQEINTFIGQSVEKHRATLDPSNPRDFIDVYLLRMEKDKSDPSSEFHHQNLILTVLSLFFAGTETTSTTLRYGFLLMLKYPHVTERVQKEIEQVIGSHRPPALDDRAKMPYTDAVIHEIQRLGDLIPFGVPHTVTKDTQFRGYVIPKNTEVFPVLSSALHDPRYFETPNTFNPGHFLDANGALKRNEGFMPFSLGKRICLGEGIARTELFLFFTTILQNFSIASPVPPEDIDLTPRESGVGNVPPSYQIRFLAR</sequence>
<reference key="1">
    <citation type="journal article" date="1988" name="Mol. Pharmacol.">
        <title>Primary structures of multiple forms of cytochrome P-450 isozyme 2 derived from rabbit pulmonary and hepatic cDNAs.</title>
        <authorList>
            <person name="Gasser R."/>
            <person name="Negishi M."/>
            <person name="Philpot R.M."/>
        </authorList>
    </citation>
    <scope>NUCLEOTIDE SEQUENCE [MRNA]</scope>
</reference>
<reference key="2">
    <citation type="journal article" date="1983" name="Proc. Natl. Acad. Sci. U.S.A.">
        <title>Complete amino acid sequence and predicted membrane topology of phenobarbital-induced cytochrome P-450 (isozyme 2) from rabbit liver microsomes.</title>
        <authorList>
            <person name="Tarr G.E."/>
            <person name="Black S.D."/>
            <person name="Fujita V.S."/>
            <person name="Coon M.J."/>
        </authorList>
    </citation>
    <scope>PROTEIN SEQUENCE</scope>
</reference>
<reference key="3">
    <citation type="journal article" date="1983" name="J. Biol. Chem.">
        <title>The complete amino acid sequence of rabbit phenobarbital-induced liver microsomal cytochrome P-450.</title>
        <authorList>
            <person name="Heinemann F.S."/>
            <person name="Ozols J."/>
        </authorList>
    </citation>
    <scope>PROTEIN SEQUENCE</scope>
</reference>
<reference key="4">
    <citation type="journal article" date="1987" name="Drug Metab. Dispos.">
        <title>Cytochrome P-450 isozymes 2 and 5 in rabbit lung and liver. Comparisons of structure and inducibility.</title>
        <authorList>
            <person name="Parandoosh Z."/>
            <person name="Fujita V.S."/>
            <person name="Coon M.J."/>
            <person name="Philpot R.M."/>
        </authorList>
    </citation>
    <scope>PROTEIN SEQUENCE OF 1-24</scope>
</reference>
<reference key="5">
    <citation type="journal article" date="1988" name="Biochemistry">
        <title>Microheterogeneity in the major phenobarbital-inducible forms of rabbit liver microsomal cytochrome P-450 as revealed by nucleotide sequencing of cloned cDNAs.</title>
        <authorList>
            <person name="Komori M."/>
            <person name="Imai Y."/>
            <person name="Tsunasawa S."/>
            <person name="Sato R."/>
        </authorList>
    </citation>
    <scope>NUCLEOTIDE SEQUENCE [MRNA] OF 301-491 (B1)</scope>
</reference>
<reference key="6">
    <citation type="journal article" date="2002" name="J. Inorg. Biochem.">
        <title>Replacement of active-site cysteine-436 by serine converts cytochrome P450 2B4 into an NADPH oxidase with negligible monooxygenase activity.</title>
        <authorList>
            <person name="Vatsis K.P."/>
            <person name="Peng H.-M."/>
            <person name="Coon M.J."/>
        </authorList>
    </citation>
    <scope>MUTAGENESIS OF CYS-436</scope>
</reference>
<reference key="7">
    <citation type="journal article" date="2003" name="Proc. Natl. Acad. Sci. U.S.A.">
        <title>An open conformation of mammalian cytochrome P450 2B4 at 1.6-A resolution.</title>
        <authorList>
            <person name="Scott E.E."/>
            <person name="He Y.A."/>
            <person name="Wester M.R."/>
            <person name="White M.A."/>
            <person name="Chin C.C."/>
            <person name="Halpert J.R."/>
            <person name="Johnson E.F."/>
            <person name="Stout C.D."/>
        </authorList>
    </citation>
    <scope>X-RAY CRYSTALLOGRAPHY (1.6 ANGSTROMS)</scope>
</reference>
<gene>
    <name type="primary">CYP2B4</name>
</gene>
<name>CP2B4_RABIT</name>
<organism>
    <name type="scientific">Oryctolagus cuniculus</name>
    <name type="common">Rabbit</name>
    <dbReference type="NCBI Taxonomy" id="9986"/>
    <lineage>
        <taxon>Eukaryota</taxon>
        <taxon>Metazoa</taxon>
        <taxon>Chordata</taxon>
        <taxon>Craniata</taxon>
        <taxon>Vertebrata</taxon>
        <taxon>Euteleostomi</taxon>
        <taxon>Mammalia</taxon>
        <taxon>Eutheria</taxon>
        <taxon>Euarchontoglires</taxon>
        <taxon>Glires</taxon>
        <taxon>Lagomorpha</taxon>
        <taxon>Leporidae</taxon>
        <taxon>Oryctolagus</taxon>
    </lineage>
</organism>
<proteinExistence type="evidence at protein level"/>
<comment type="function">
    <text>Cytochromes P450 are a group of heme-thiolate monooxygenases. In liver microsomes, this enzyme is involved in an NADPH-dependent electron transport pathway. It oxidizes a variety of structurally unrelated compounds, including steroids, fatty acids, and xenobiotics. In the epoxidation of arachidonic acid it has a unique preference for the 5,6-olefin.</text>
</comment>
<comment type="catalytic activity">
    <reaction>
        <text>an organic molecule + reduced [NADPH--hemoprotein reductase] + O2 = an alcohol + oxidized [NADPH--hemoprotein reductase] + H2O + H(+)</text>
        <dbReference type="Rhea" id="RHEA:17149"/>
        <dbReference type="Rhea" id="RHEA-COMP:11964"/>
        <dbReference type="Rhea" id="RHEA-COMP:11965"/>
        <dbReference type="ChEBI" id="CHEBI:15377"/>
        <dbReference type="ChEBI" id="CHEBI:15378"/>
        <dbReference type="ChEBI" id="CHEBI:15379"/>
        <dbReference type="ChEBI" id="CHEBI:30879"/>
        <dbReference type="ChEBI" id="CHEBI:57618"/>
        <dbReference type="ChEBI" id="CHEBI:58210"/>
        <dbReference type="ChEBI" id="CHEBI:142491"/>
        <dbReference type="EC" id="1.14.14.1"/>
    </reaction>
</comment>
<comment type="cofactor">
    <cofactor>
        <name>heme</name>
        <dbReference type="ChEBI" id="CHEBI:30413"/>
    </cofactor>
</comment>
<comment type="subcellular location">
    <subcellularLocation>
        <location>Endoplasmic reticulum membrane</location>
        <topology>Peripheral membrane protein</topology>
    </subcellularLocation>
    <subcellularLocation>
        <location>Microsome membrane</location>
        <topology>Peripheral membrane protein</topology>
    </subcellularLocation>
</comment>
<comment type="induction">
    <text>By phenobarbital.</text>
</comment>
<comment type="polymorphism">
    <text>Types B0 and B1 are probably allelic variants.</text>
</comment>
<comment type="similarity">
    <text evidence="3">Belongs to the cytochrome P450 family.</text>
</comment>
<dbReference type="EC" id="1.14.14.1"/>
<dbReference type="EMBL" id="M20856">
    <property type="protein sequence ID" value="AAA65840.1"/>
    <property type="molecule type" value="mRNA"/>
</dbReference>
<dbReference type="EMBL" id="M20857">
    <property type="protein sequence ID" value="AAA31224.1"/>
    <property type="molecule type" value="mRNA"/>
</dbReference>
<dbReference type="PIR" id="A00179">
    <property type="entry name" value="O4RBPC"/>
</dbReference>
<dbReference type="PIR" id="S31277">
    <property type="entry name" value="S31277"/>
</dbReference>
<dbReference type="RefSeq" id="NP_001164602.1">
    <property type="nucleotide sequence ID" value="NM_001171131.1"/>
</dbReference>
<dbReference type="PDB" id="1PO5">
    <property type="method" value="X-ray"/>
    <property type="resolution" value="1.60 A"/>
    <property type="chains" value="A=25-491"/>
</dbReference>
<dbReference type="PDB" id="1SUO">
    <property type="method" value="X-ray"/>
    <property type="resolution" value="1.90 A"/>
    <property type="chains" value="A=25-491"/>
</dbReference>
<dbReference type="PDB" id="2BDM">
    <property type="method" value="X-ray"/>
    <property type="resolution" value="2.30 A"/>
    <property type="chains" value="A=25-491"/>
</dbReference>
<dbReference type="PDB" id="2Q6N">
    <property type="method" value="X-ray"/>
    <property type="resolution" value="3.20 A"/>
    <property type="chains" value="A/B/C/D/E/F/G=25-491"/>
</dbReference>
<dbReference type="PDB" id="3G5N">
    <property type="method" value="X-ray"/>
    <property type="resolution" value="2.50 A"/>
    <property type="chains" value="A/B/C/D=25-491"/>
</dbReference>
<dbReference type="PDB" id="3G93">
    <property type="method" value="X-ray"/>
    <property type="resolution" value="3.20 A"/>
    <property type="chains" value="A/B/C/D=25-491"/>
</dbReference>
<dbReference type="PDB" id="3KW4">
    <property type="method" value="X-ray"/>
    <property type="resolution" value="2.67 A"/>
    <property type="chains" value="A=25-491"/>
</dbReference>
<dbReference type="PDB" id="3ME6">
    <property type="method" value="X-ray"/>
    <property type="resolution" value="3.10 A"/>
    <property type="chains" value="A/B/C/D=25-491"/>
</dbReference>
<dbReference type="PDB" id="3MVR">
    <property type="method" value="X-ray"/>
    <property type="resolution" value="1.76 A"/>
    <property type="chains" value="A/B=25-491"/>
</dbReference>
<dbReference type="PDB" id="3R1A">
    <property type="method" value="X-ray"/>
    <property type="resolution" value="3.50 A"/>
    <property type="chains" value="A/B/C/D/E/F/G/H=25-491"/>
</dbReference>
<dbReference type="PDB" id="3R1B">
    <property type="method" value="X-ray"/>
    <property type="resolution" value="3.00 A"/>
    <property type="chains" value="A/B/C/D=25-491"/>
</dbReference>
<dbReference type="PDB" id="3TK3">
    <property type="method" value="X-ray"/>
    <property type="resolution" value="2.80 A"/>
    <property type="chains" value="A/B/C/D=25-491"/>
</dbReference>
<dbReference type="PDB" id="3TMZ">
    <property type="method" value="X-ray"/>
    <property type="resolution" value="2.25 A"/>
    <property type="chains" value="A=25-491"/>
</dbReference>
<dbReference type="PDB" id="3UAS">
    <property type="method" value="X-ray"/>
    <property type="resolution" value="2.94 A"/>
    <property type="chains" value="A=25-491"/>
</dbReference>
<dbReference type="PDB" id="4H1N">
    <property type="method" value="X-ray"/>
    <property type="resolution" value="2.99 A"/>
    <property type="chains" value="A=25-491"/>
</dbReference>
<dbReference type="PDB" id="4JLT">
    <property type="method" value="X-ray"/>
    <property type="resolution" value="2.14 A"/>
    <property type="chains" value="A=25-491"/>
</dbReference>
<dbReference type="PDB" id="4MGJ">
    <property type="method" value="X-ray"/>
    <property type="resolution" value="2.41 A"/>
    <property type="chains" value="A=30-491"/>
</dbReference>
<dbReference type="PDB" id="5EM4">
    <property type="method" value="X-ray"/>
    <property type="resolution" value="3.02 A"/>
    <property type="chains" value="A/B=1-491"/>
</dbReference>
<dbReference type="PDB" id="5IUT">
    <property type="method" value="X-ray"/>
    <property type="resolution" value="2.34 A"/>
    <property type="chains" value="A=25-491"/>
</dbReference>
<dbReference type="PDB" id="5IUZ">
    <property type="method" value="X-ray"/>
    <property type="resolution" value="2.73 A"/>
    <property type="chains" value="A/B=25-491"/>
</dbReference>
<dbReference type="PDB" id="6BWW">
    <property type="method" value="X-ray"/>
    <property type="resolution" value="2.10 A"/>
    <property type="chains" value="A=30-491"/>
</dbReference>
<dbReference type="PDBsum" id="1PO5"/>
<dbReference type="PDBsum" id="1SUO"/>
<dbReference type="PDBsum" id="2BDM"/>
<dbReference type="PDBsum" id="2Q6N"/>
<dbReference type="PDBsum" id="3G5N"/>
<dbReference type="PDBsum" id="3G93"/>
<dbReference type="PDBsum" id="3KW4"/>
<dbReference type="PDBsum" id="3ME6"/>
<dbReference type="PDBsum" id="3MVR"/>
<dbReference type="PDBsum" id="3R1A"/>
<dbReference type="PDBsum" id="3R1B"/>
<dbReference type="PDBsum" id="3TK3"/>
<dbReference type="PDBsum" id="3TMZ"/>
<dbReference type="PDBsum" id="3UAS"/>
<dbReference type="PDBsum" id="4H1N"/>
<dbReference type="PDBsum" id="4JLT"/>
<dbReference type="PDBsum" id="4MGJ"/>
<dbReference type="PDBsum" id="5EM4"/>
<dbReference type="PDBsum" id="5IUT"/>
<dbReference type="PDBsum" id="5IUZ"/>
<dbReference type="PDBsum" id="6BWW"/>
<dbReference type="SMR" id="P00178"/>
<dbReference type="FunCoup" id="P00178">
    <property type="interactions" value="685"/>
</dbReference>
<dbReference type="STRING" id="9986.ENSOCUP00000039568"/>
<dbReference type="BindingDB" id="P00178"/>
<dbReference type="ChEMBL" id="CHEMBL1743542"/>
<dbReference type="iPTMnet" id="P00178"/>
<dbReference type="PaxDb" id="9986-ENSOCUP00000022188"/>
<dbReference type="KEGG" id="ocu:100328948"/>
<dbReference type="eggNOG" id="KOG0156">
    <property type="taxonomic scope" value="Eukaryota"/>
</dbReference>
<dbReference type="InParanoid" id="P00178"/>
<dbReference type="OrthoDB" id="1055148at2759"/>
<dbReference type="SABIO-RK" id="P00178"/>
<dbReference type="EvolutionaryTrace" id="P00178"/>
<dbReference type="PRO" id="PR:P00178"/>
<dbReference type="Proteomes" id="UP000001811">
    <property type="component" value="Unplaced"/>
</dbReference>
<dbReference type="GO" id="GO:0005789">
    <property type="term" value="C:endoplasmic reticulum membrane"/>
    <property type="evidence" value="ECO:0007669"/>
    <property type="project" value="UniProtKB-SubCell"/>
</dbReference>
<dbReference type="GO" id="GO:0008392">
    <property type="term" value="F:arachidonate epoxygenase activity"/>
    <property type="evidence" value="ECO:0007669"/>
    <property type="project" value="TreeGrafter"/>
</dbReference>
<dbReference type="GO" id="GO:0020037">
    <property type="term" value="F:heme binding"/>
    <property type="evidence" value="ECO:0007669"/>
    <property type="project" value="InterPro"/>
</dbReference>
<dbReference type="GO" id="GO:0005506">
    <property type="term" value="F:iron ion binding"/>
    <property type="evidence" value="ECO:0007669"/>
    <property type="project" value="InterPro"/>
</dbReference>
<dbReference type="GO" id="GO:0016712">
    <property type="term" value="F:oxidoreductase activity, acting on paired donors, with incorporation or reduction of molecular oxygen, reduced flavin or flavoprotein as one donor, and incorporation of one atom of oxygen"/>
    <property type="evidence" value="ECO:0007669"/>
    <property type="project" value="UniProtKB-EC"/>
</dbReference>
<dbReference type="GO" id="GO:0019373">
    <property type="term" value="P:epoxygenase P450 pathway"/>
    <property type="evidence" value="ECO:0007669"/>
    <property type="project" value="TreeGrafter"/>
</dbReference>
<dbReference type="GO" id="GO:0006805">
    <property type="term" value="P:xenobiotic metabolic process"/>
    <property type="evidence" value="ECO:0007669"/>
    <property type="project" value="TreeGrafter"/>
</dbReference>
<dbReference type="CDD" id="cd20672">
    <property type="entry name" value="CYP2B"/>
    <property type="match status" value="1"/>
</dbReference>
<dbReference type="FunFam" id="1.10.630.10:FF:000001">
    <property type="entry name" value="Cytochrome P450, family 2"/>
    <property type="match status" value="1"/>
</dbReference>
<dbReference type="Gene3D" id="1.10.630.10">
    <property type="entry name" value="Cytochrome P450"/>
    <property type="match status" value="1"/>
</dbReference>
<dbReference type="InterPro" id="IPR001128">
    <property type="entry name" value="Cyt_P450"/>
</dbReference>
<dbReference type="InterPro" id="IPR017972">
    <property type="entry name" value="Cyt_P450_CS"/>
</dbReference>
<dbReference type="InterPro" id="IPR002401">
    <property type="entry name" value="Cyt_P450_E_grp-I"/>
</dbReference>
<dbReference type="InterPro" id="IPR008068">
    <property type="entry name" value="Cyt_P450_E_grp-I_CYP2B-like"/>
</dbReference>
<dbReference type="InterPro" id="IPR036396">
    <property type="entry name" value="Cyt_P450_sf"/>
</dbReference>
<dbReference type="InterPro" id="IPR050182">
    <property type="entry name" value="Cytochrome_P450_fam2"/>
</dbReference>
<dbReference type="PANTHER" id="PTHR24300:SF406">
    <property type="entry name" value="CYTOCHROME P450 2B6"/>
    <property type="match status" value="1"/>
</dbReference>
<dbReference type="PANTHER" id="PTHR24300">
    <property type="entry name" value="CYTOCHROME P450 508A4-RELATED"/>
    <property type="match status" value="1"/>
</dbReference>
<dbReference type="Pfam" id="PF00067">
    <property type="entry name" value="p450"/>
    <property type="match status" value="1"/>
</dbReference>
<dbReference type="PRINTS" id="PR00463">
    <property type="entry name" value="EP450I"/>
</dbReference>
<dbReference type="PRINTS" id="PR01685">
    <property type="entry name" value="EP450ICYP2B"/>
</dbReference>
<dbReference type="PRINTS" id="PR00385">
    <property type="entry name" value="P450"/>
</dbReference>
<dbReference type="SUPFAM" id="SSF48264">
    <property type="entry name" value="Cytochrome P450"/>
    <property type="match status" value="1"/>
</dbReference>
<dbReference type="PROSITE" id="PS00086">
    <property type="entry name" value="CYTOCHROME_P450"/>
    <property type="match status" value="1"/>
</dbReference>
<feature type="chain" id="PRO_0000051681" description="Cytochrome P450 2B4">
    <location>
        <begin position="1"/>
        <end position="491"/>
    </location>
</feature>
<feature type="binding site" description="axial binding residue">
    <location>
        <position position="436"/>
    </location>
    <ligand>
        <name>heme</name>
        <dbReference type="ChEBI" id="CHEBI:30413"/>
    </ligand>
    <ligandPart>
        <name>Fe</name>
        <dbReference type="ChEBI" id="CHEBI:18248"/>
    </ligandPart>
</feature>
<feature type="modified residue" description="Phosphoserine; by PKA" evidence="1">
    <location>
        <position position="128"/>
    </location>
</feature>
<feature type="sequence variant" description="In B1.">
    <original>V</original>
    <variation>I</variation>
    <location>
        <position position="39"/>
    </location>
</feature>
<feature type="sequence variant" description="In B1.">
    <original>I</original>
    <variation>V</variation>
    <location>
        <position position="174"/>
    </location>
</feature>
<feature type="sequence variant" description="In B1.">
    <original>L</original>
    <variation>I</variation>
    <location>
        <position position="290"/>
    </location>
</feature>
<feature type="sequence variant" description="In B1.">
    <original>M</original>
    <variation>L</variation>
    <location>
        <position position="314"/>
    </location>
</feature>
<feature type="sequence variant" description="In B1.">
    <original>L</original>
    <variation>M</variation>
    <location>
        <position position="420"/>
    </location>
</feature>
<feature type="mutagenesis site" description="Conversion into an NADPH oxidase with negligible monooxygenase activity." evidence="2">
    <original>C</original>
    <variation>S</variation>
    <location>
        <position position="436"/>
    </location>
</feature>
<feature type="sequence conflict" description="In Ref. 3; AA sequence." evidence="3" ref="3">
    <original>Q</original>
    <variation>E</variation>
    <location>
        <position position="91"/>
    </location>
</feature>
<feature type="sequence conflict" description="In Ref. 3; AA sequence." evidence="3" ref="3">
    <original>FS</original>
    <variation>SF</variation>
    <location>
        <begin position="95"/>
        <end position="96"/>
    </location>
</feature>
<feature type="sequence conflict" description="In Ref. 3; AA sequence." evidence="3" ref="3">
    <location>
        <begin position="99"/>
        <end position="100"/>
    </location>
</feature>
<feature type="sequence conflict" description="In Ref. 3; AA sequence." evidence="3" ref="3">
    <original>FG</original>
    <variation>GY</variation>
    <location>
        <begin position="135"/>
        <end position="136"/>
    </location>
</feature>
<feature type="sequence conflict" description="In Ref. 3; AA sequence." evidence="3" ref="3">
    <original>P</original>
    <variation>K</variation>
    <location>
        <position position="193"/>
    </location>
</feature>
<feature type="sequence conflict" description="In Ref. 3; AA sequence." evidence="3" ref="3">
    <original>P</original>
    <variation>S</variation>
    <location>
        <position position="221"/>
    </location>
</feature>
<feature type="sequence conflict" description="In Ref. 3; AA sequence." evidence="3" ref="3">
    <original>T</original>
    <variation>A</variation>
    <location>
        <position position="303"/>
    </location>
</feature>
<feature type="sequence conflict" description="In Ref. 3; AA sequence." evidence="3" ref="3">
    <original>SPVPP</original>
    <variation>GNLSL</variation>
    <location>
        <begin position="461"/>
        <end position="465"/>
    </location>
</feature>
<feature type="turn" evidence="4">
    <location>
        <begin position="38"/>
        <end position="40"/>
    </location>
</feature>
<feature type="helix" evidence="4">
    <location>
        <begin position="43"/>
        <end position="45"/>
    </location>
</feature>
<feature type="helix" evidence="4">
    <location>
        <begin position="51"/>
        <end position="62"/>
    </location>
</feature>
<feature type="strand" evidence="4">
    <location>
        <begin position="64"/>
        <end position="70"/>
    </location>
</feature>
<feature type="strand" evidence="4">
    <location>
        <begin position="73"/>
        <end position="78"/>
    </location>
</feature>
<feature type="helix" evidence="4">
    <location>
        <begin position="81"/>
        <end position="88"/>
    </location>
</feature>
<feature type="turn" evidence="4">
    <location>
        <begin position="89"/>
        <end position="95"/>
    </location>
</feature>
<feature type="helix" evidence="4">
    <location>
        <begin position="101"/>
        <end position="104"/>
    </location>
</feature>
<feature type="helix" evidence="7">
    <location>
        <begin position="105"/>
        <end position="108"/>
    </location>
</feature>
<feature type="helix" evidence="7">
    <location>
        <begin position="112"/>
        <end position="115"/>
    </location>
</feature>
<feature type="helix" evidence="4">
    <location>
        <begin position="118"/>
        <end position="134"/>
    </location>
</feature>
<feature type="turn" evidence="8">
    <location>
        <begin position="135"/>
        <end position="138"/>
    </location>
</feature>
<feature type="helix" evidence="4">
    <location>
        <begin position="139"/>
        <end position="159"/>
    </location>
</feature>
<feature type="turn" evidence="4">
    <location>
        <begin position="160"/>
        <end position="162"/>
    </location>
</feature>
<feature type="strand" evidence="6">
    <location>
        <begin position="165"/>
        <end position="167"/>
    </location>
</feature>
<feature type="helix" evidence="4">
    <location>
        <begin position="168"/>
        <end position="184"/>
    </location>
</feature>
<feature type="helix" evidence="4">
    <location>
        <begin position="193"/>
        <end position="205"/>
    </location>
</feature>
<feature type="turn" evidence="4">
    <location>
        <begin position="206"/>
        <end position="208"/>
    </location>
</feature>
<feature type="helix" evidence="4">
    <location>
        <begin position="213"/>
        <end position="219"/>
    </location>
</feature>
<feature type="helix" evidence="4">
    <location>
        <begin position="221"/>
        <end position="225"/>
    </location>
</feature>
<feature type="helix" evidence="4">
    <location>
        <begin position="231"/>
        <end position="253"/>
    </location>
</feature>
<feature type="strand" evidence="6">
    <location>
        <begin position="258"/>
        <end position="260"/>
    </location>
</feature>
<feature type="helix" evidence="4">
    <location>
        <begin position="264"/>
        <end position="275"/>
    </location>
</feature>
<feature type="helix" evidence="4">
    <location>
        <begin position="282"/>
        <end position="316"/>
    </location>
</feature>
<feature type="helix" evidence="4">
    <location>
        <begin position="318"/>
        <end position="331"/>
    </location>
</feature>
<feature type="strand" evidence="4">
    <location>
        <begin position="334"/>
        <end position="336"/>
    </location>
</feature>
<feature type="helix" evidence="4">
    <location>
        <begin position="340"/>
        <end position="345"/>
    </location>
</feature>
<feature type="helix" evidence="4">
    <location>
        <begin position="347"/>
        <end position="360"/>
    </location>
</feature>
<feature type="strand" evidence="9">
    <location>
        <begin position="362"/>
        <end position="365"/>
    </location>
</feature>
<feature type="strand" evidence="4">
    <location>
        <begin position="375"/>
        <end position="377"/>
    </location>
</feature>
<feature type="strand" evidence="4">
    <location>
        <begin position="380"/>
        <end position="382"/>
    </location>
</feature>
<feature type="strand" evidence="4">
    <location>
        <begin position="387"/>
        <end position="390"/>
    </location>
</feature>
<feature type="helix" evidence="4">
    <location>
        <begin position="392"/>
        <end position="396"/>
    </location>
</feature>
<feature type="turn" evidence="4">
    <location>
        <begin position="399"/>
        <end position="401"/>
    </location>
</feature>
<feature type="strand" evidence="5">
    <location>
        <begin position="402"/>
        <end position="404"/>
    </location>
</feature>
<feature type="helix" evidence="4">
    <location>
        <begin position="410"/>
        <end position="413"/>
    </location>
</feature>
<feature type="strand" evidence="8">
    <location>
        <begin position="418"/>
        <end position="420"/>
    </location>
</feature>
<feature type="helix" evidence="7">
    <location>
        <begin position="432"/>
        <end position="434"/>
    </location>
</feature>
<feature type="helix" evidence="4">
    <location>
        <begin position="439"/>
        <end position="456"/>
    </location>
</feature>
<feature type="strand" evidence="4">
    <location>
        <begin position="457"/>
        <end position="460"/>
    </location>
</feature>
<feature type="helix" evidence="4">
    <location>
        <begin position="465"/>
        <end position="467"/>
    </location>
</feature>
<feature type="strand" evidence="5">
    <location>
        <begin position="473"/>
        <end position="480"/>
    </location>
</feature>
<feature type="strand" evidence="4">
    <location>
        <begin position="486"/>
        <end position="490"/>
    </location>
</feature>
<accession>P00178</accession>
<accession>P00177</accession>
<evidence type="ECO:0000250" key="1">
    <source>
        <dbReference type="UniProtKB" id="P00176"/>
    </source>
</evidence>
<evidence type="ECO:0000269" key="2">
    <source>
    </source>
</evidence>
<evidence type="ECO:0000305" key="3"/>
<evidence type="ECO:0007829" key="4">
    <source>
        <dbReference type="PDB" id="1PO5"/>
    </source>
</evidence>
<evidence type="ECO:0007829" key="5">
    <source>
        <dbReference type="PDB" id="1SUO"/>
    </source>
</evidence>
<evidence type="ECO:0007829" key="6">
    <source>
        <dbReference type="PDB" id="3ME6"/>
    </source>
</evidence>
<evidence type="ECO:0007829" key="7">
    <source>
        <dbReference type="PDB" id="3MVR"/>
    </source>
</evidence>
<evidence type="ECO:0007829" key="8">
    <source>
        <dbReference type="PDB" id="3R1A"/>
    </source>
</evidence>
<evidence type="ECO:0007829" key="9">
    <source>
        <dbReference type="PDB" id="4H1N"/>
    </source>
</evidence>